<keyword id="KW-0030">Aminoacyl-tRNA synthetase</keyword>
<keyword id="KW-0067">ATP-binding</keyword>
<keyword id="KW-0963">Cytoplasm</keyword>
<keyword id="KW-0436">Ligase</keyword>
<keyword id="KW-0547">Nucleotide-binding</keyword>
<keyword id="KW-0648">Protein biosynthesis</keyword>
<keyword id="KW-1185">Reference proteome</keyword>
<keyword id="KW-0808">Transferase</keyword>
<accession>Q06817</accession>
<accession>D6W483</accession>
<sequence>MPLMSNSERDKLESTLRRRFFYTPSFEIYGGVSGLFDLGPPGCQLQNNLIRLWREHFIMEENMLQVDGPMLTPYDVLKTSGHVDKFTDWMCRNPKTGEYYRADHLIEQTLKKRLLDKDVNPQDMKNMEKILTTIDGFSGPELNLVMQEYNINDPVTNDVLDALTSFNLMFETKIGASGQLKAFLRPETAQGQFLNFNKLLEINQGKIPFASASIGKSFRNEISPRSGLLRVREFLMAEIEHFVDPLNKSHAKFNEVLNEEIPLLSRRLQESGEVQLPVKMTIGEAVNSGMVENETLGYFMARVHQFLLNIGINKDKFRFRQHLKNEMAHYATDCWDGEILTSYGWIECVGCADRAAFDLTVHSKKTGRSLTVKQKLDTPKERTEWVVEVNKKFFGSKFKQKAKLIESVLSKFSQDELIRRHEELEKNGEFTCQVNGQIVKLDSSLVTIKMKTTLQHIREYIPNVIEPSFGLGRIIYCIFDHCFQVRVDSESRGFFSFPLQIAPIKVFVTTISNNDGFPAILKRISQALRKREIYFKIDDSNTSIGKKYARNDELGTPFGITIDFETIKDQTVTLRERNSMRQVRGTITDVISTIDKMLHNPDESDWDKSTFGLSPVKI</sequence>
<gene>
    <name type="primary">GRS2</name>
    <name type="ordered locus">YPR081C</name>
</gene>
<feature type="chain" id="PRO_0000073006" description="Glycine--tRNA ligase 2">
    <location>
        <begin position="1"/>
        <end position="618"/>
    </location>
</feature>
<feature type="binding site" evidence="1">
    <location>
        <position position="187"/>
    </location>
    <ligand>
        <name>glycine</name>
        <dbReference type="ChEBI" id="CHEBI:57305"/>
    </ligand>
</feature>
<feature type="binding site" evidence="1">
    <location>
        <begin position="219"/>
        <end position="221"/>
    </location>
    <ligand>
        <name>ATP</name>
        <dbReference type="ChEBI" id="CHEBI:30616"/>
    </ligand>
</feature>
<feature type="binding site" evidence="1">
    <location>
        <begin position="230"/>
        <end position="231"/>
    </location>
    <ligand>
        <name>ATP</name>
        <dbReference type="ChEBI" id="CHEBI:30616"/>
    </ligand>
</feature>
<feature type="binding site" evidence="1">
    <location>
        <position position="238"/>
    </location>
    <ligand>
        <name>glycine</name>
        <dbReference type="ChEBI" id="CHEBI:57305"/>
    </ligand>
</feature>
<feature type="binding site" evidence="1">
    <location>
        <begin position="347"/>
        <end position="348"/>
    </location>
    <ligand>
        <name>ATP</name>
        <dbReference type="ChEBI" id="CHEBI:30616"/>
    </ligand>
</feature>
<feature type="binding site" evidence="1">
    <location>
        <begin position="466"/>
        <end position="468"/>
    </location>
    <ligand>
        <name>glycine</name>
        <dbReference type="ChEBI" id="CHEBI:57305"/>
    </ligand>
</feature>
<feature type="binding site" evidence="1">
    <location>
        <position position="473"/>
    </location>
    <ligand>
        <name>ATP</name>
        <dbReference type="ChEBI" id="CHEBI:30616"/>
    </ligand>
</feature>
<evidence type="ECO:0000250" key="1">
    <source>
        <dbReference type="UniProtKB" id="P41250"/>
    </source>
</evidence>
<evidence type="ECO:0000269" key="2">
    <source>
    </source>
</evidence>
<evidence type="ECO:0000269" key="3">
    <source>
    </source>
</evidence>
<evidence type="ECO:0000269" key="4">
    <source>
    </source>
</evidence>
<evidence type="ECO:0000305" key="5"/>
<evidence type="ECO:0000305" key="6">
    <source>
    </source>
</evidence>
<proteinExistence type="evidence at protein level"/>
<dbReference type="EC" id="6.1.1.14" evidence="4"/>
<dbReference type="EC" id="2.7.7.-" evidence="1"/>
<dbReference type="EMBL" id="U51033">
    <property type="protein sequence ID" value="AAB68130.1"/>
    <property type="molecule type" value="Genomic_DNA"/>
</dbReference>
<dbReference type="EMBL" id="BK006949">
    <property type="protein sequence ID" value="DAA11499.1"/>
    <property type="molecule type" value="Genomic_DNA"/>
</dbReference>
<dbReference type="PIR" id="S69067">
    <property type="entry name" value="S69067"/>
</dbReference>
<dbReference type="RefSeq" id="NP_015406.1">
    <property type="nucleotide sequence ID" value="NM_001184178.1"/>
</dbReference>
<dbReference type="SMR" id="Q06817"/>
<dbReference type="BioGRID" id="36252">
    <property type="interactions" value="60"/>
</dbReference>
<dbReference type="FunCoup" id="Q06817">
    <property type="interactions" value="1058"/>
</dbReference>
<dbReference type="IntAct" id="Q06817">
    <property type="interactions" value="7"/>
</dbReference>
<dbReference type="MINT" id="Q06817"/>
<dbReference type="STRING" id="4932.YPR081C"/>
<dbReference type="iPTMnet" id="Q06817"/>
<dbReference type="PaxDb" id="4932-YPR081C"/>
<dbReference type="PeptideAtlas" id="Q06817"/>
<dbReference type="EnsemblFungi" id="YPR081C_mRNA">
    <property type="protein sequence ID" value="YPR081C"/>
    <property type="gene ID" value="YPR081C"/>
</dbReference>
<dbReference type="GeneID" id="856196"/>
<dbReference type="KEGG" id="sce:YPR081C"/>
<dbReference type="AGR" id="SGD:S000006285"/>
<dbReference type="SGD" id="S000006285">
    <property type="gene designation" value="GRS2"/>
</dbReference>
<dbReference type="VEuPathDB" id="FungiDB:YPR081C"/>
<dbReference type="eggNOG" id="KOG2298">
    <property type="taxonomic scope" value="Eukaryota"/>
</dbReference>
<dbReference type="GeneTree" id="ENSGT00940000153759"/>
<dbReference type="HOGENOM" id="CLU_015515_1_0_1"/>
<dbReference type="InParanoid" id="Q06817"/>
<dbReference type="OMA" id="FIMEENM"/>
<dbReference type="OrthoDB" id="57698at2759"/>
<dbReference type="BioCyc" id="YEAST:G3O-34225-MONOMER"/>
<dbReference type="BRENDA" id="6.1.1.14">
    <property type="organism ID" value="984"/>
</dbReference>
<dbReference type="BioGRID-ORCS" id="856196">
    <property type="hits" value="0 hits in 10 CRISPR screens"/>
</dbReference>
<dbReference type="PRO" id="PR:Q06817"/>
<dbReference type="Proteomes" id="UP000002311">
    <property type="component" value="Chromosome XVI"/>
</dbReference>
<dbReference type="RNAct" id="Q06817">
    <property type="molecule type" value="protein"/>
</dbReference>
<dbReference type="GO" id="GO:0005737">
    <property type="term" value="C:cytoplasm"/>
    <property type="evidence" value="ECO:0000314"/>
    <property type="project" value="SGD"/>
</dbReference>
<dbReference type="GO" id="GO:0005739">
    <property type="term" value="C:mitochondrion"/>
    <property type="evidence" value="ECO:0000318"/>
    <property type="project" value="GO_Central"/>
</dbReference>
<dbReference type="GO" id="GO:0005524">
    <property type="term" value="F:ATP binding"/>
    <property type="evidence" value="ECO:0007669"/>
    <property type="project" value="UniProtKB-KW"/>
</dbReference>
<dbReference type="GO" id="GO:0141192">
    <property type="term" value="F:ATP:ATP adenylyltransferase activity"/>
    <property type="evidence" value="ECO:0007669"/>
    <property type="project" value="RHEA"/>
</dbReference>
<dbReference type="GO" id="GO:0004820">
    <property type="term" value="F:glycine-tRNA ligase activity"/>
    <property type="evidence" value="ECO:0000314"/>
    <property type="project" value="SGD"/>
</dbReference>
<dbReference type="GO" id="GO:0046983">
    <property type="term" value="F:protein dimerization activity"/>
    <property type="evidence" value="ECO:0000250"/>
    <property type="project" value="UniProtKB"/>
</dbReference>
<dbReference type="GO" id="GO:0015966">
    <property type="term" value="P:diadenosine tetraphosphate biosynthetic process"/>
    <property type="evidence" value="ECO:0000250"/>
    <property type="project" value="UniProtKB"/>
</dbReference>
<dbReference type="GO" id="GO:0006426">
    <property type="term" value="P:glycyl-tRNA aminoacylation"/>
    <property type="evidence" value="ECO:0000316"/>
    <property type="project" value="SGD"/>
</dbReference>
<dbReference type="GO" id="GO:0070150">
    <property type="term" value="P:mitochondrial glycyl-tRNA aminoacylation"/>
    <property type="evidence" value="ECO:0000318"/>
    <property type="project" value="GO_Central"/>
</dbReference>
<dbReference type="CDD" id="cd00774">
    <property type="entry name" value="GlyRS-like_core"/>
    <property type="match status" value="1"/>
</dbReference>
<dbReference type="CDD" id="cd00858">
    <property type="entry name" value="GlyRS_anticodon"/>
    <property type="match status" value="1"/>
</dbReference>
<dbReference type="FunFam" id="3.30.40.230:FF:000001">
    <property type="entry name" value="Glycine--tRNA ligase"/>
    <property type="match status" value="1"/>
</dbReference>
<dbReference type="FunFam" id="3.30.720.200:FF:000001">
    <property type="entry name" value="Glycine--tRNA ligase 2"/>
    <property type="match status" value="1"/>
</dbReference>
<dbReference type="FunFam" id="3.40.50.800:FF:000004">
    <property type="entry name" value="Glycine--tRNA ligase 2"/>
    <property type="match status" value="1"/>
</dbReference>
<dbReference type="FunFam" id="3.30.930.10:FF:000010">
    <property type="entry name" value="Glycyl-tRNA synthetase 1"/>
    <property type="match status" value="1"/>
</dbReference>
<dbReference type="Gene3D" id="3.30.40.230">
    <property type="match status" value="1"/>
</dbReference>
<dbReference type="Gene3D" id="3.30.720.200">
    <property type="match status" value="1"/>
</dbReference>
<dbReference type="Gene3D" id="3.40.50.800">
    <property type="entry name" value="Anticodon-binding domain"/>
    <property type="match status" value="1"/>
</dbReference>
<dbReference type="Gene3D" id="3.30.930.10">
    <property type="entry name" value="Bira Bifunctional Protein, Domain 2"/>
    <property type="match status" value="1"/>
</dbReference>
<dbReference type="InterPro" id="IPR002314">
    <property type="entry name" value="aa-tRNA-synt_IIb"/>
</dbReference>
<dbReference type="InterPro" id="IPR006195">
    <property type="entry name" value="aa-tRNA-synth_II"/>
</dbReference>
<dbReference type="InterPro" id="IPR045864">
    <property type="entry name" value="aa-tRNA-synth_II/BPL/LPL"/>
</dbReference>
<dbReference type="InterPro" id="IPR004154">
    <property type="entry name" value="Anticodon-bd"/>
</dbReference>
<dbReference type="InterPro" id="IPR036621">
    <property type="entry name" value="Anticodon-bd_dom_sf"/>
</dbReference>
<dbReference type="InterPro" id="IPR027031">
    <property type="entry name" value="Gly-tRNA_synthase/POLG2"/>
</dbReference>
<dbReference type="InterPro" id="IPR033731">
    <property type="entry name" value="GlyRS-like_core"/>
</dbReference>
<dbReference type="InterPro" id="IPR002315">
    <property type="entry name" value="tRNA-synt_gly"/>
</dbReference>
<dbReference type="NCBIfam" id="TIGR00389">
    <property type="entry name" value="glyS_dimeric"/>
    <property type="match status" value="1"/>
</dbReference>
<dbReference type="NCBIfam" id="NF003211">
    <property type="entry name" value="PRK04173.1"/>
    <property type="match status" value="1"/>
</dbReference>
<dbReference type="PANTHER" id="PTHR10745:SF0">
    <property type="entry name" value="GLYCINE--TRNA LIGASE"/>
    <property type="match status" value="1"/>
</dbReference>
<dbReference type="PANTHER" id="PTHR10745">
    <property type="entry name" value="GLYCYL-TRNA SYNTHETASE/DNA POLYMERASE SUBUNIT GAMMA-2"/>
    <property type="match status" value="1"/>
</dbReference>
<dbReference type="Pfam" id="PF03129">
    <property type="entry name" value="HGTP_anticodon"/>
    <property type="match status" value="1"/>
</dbReference>
<dbReference type="Pfam" id="PF00587">
    <property type="entry name" value="tRNA-synt_2b"/>
    <property type="match status" value="1"/>
</dbReference>
<dbReference type="PRINTS" id="PR01043">
    <property type="entry name" value="TRNASYNTHGLY"/>
</dbReference>
<dbReference type="SUPFAM" id="SSF52954">
    <property type="entry name" value="Class II aaRS ABD-related"/>
    <property type="match status" value="1"/>
</dbReference>
<dbReference type="SUPFAM" id="SSF55681">
    <property type="entry name" value="Class II aaRS and biotin synthetases"/>
    <property type="match status" value="1"/>
</dbReference>
<dbReference type="PROSITE" id="PS50862">
    <property type="entry name" value="AA_TRNA_LIGASE_II"/>
    <property type="match status" value="1"/>
</dbReference>
<reference key="1">
    <citation type="journal article" date="1997" name="Nature">
        <title>The nucleotide sequence of Saccharomyces cerevisiae chromosome XVI.</title>
        <authorList>
            <person name="Bussey H."/>
            <person name="Storms R.K."/>
            <person name="Ahmed A."/>
            <person name="Albermann K."/>
            <person name="Allen E."/>
            <person name="Ansorge W."/>
            <person name="Araujo R."/>
            <person name="Aparicio A."/>
            <person name="Barrell B.G."/>
            <person name="Badcock K."/>
            <person name="Benes V."/>
            <person name="Botstein D."/>
            <person name="Bowman S."/>
            <person name="Brueckner M."/>
            <person name="Carpenter J."/>
            <person name="Cherry J.M."/>
            <person name="Chung E."/>
            <person name="Churcher C.M."/>
            <person name="Coster F."/>
            <person name="Davis K."/>
            <person name="Davis R.W."/>
            <person name="Dietrich F.S."/>
            <person name="Delius H."/>
            <person name="DiPaolo T."/>
            <person name="Dubois E."/>
            <person name="Duesterhoeft A."/>
            <person name="Duncan M."/>
            <person name="Floeth M."/>
            <person name="Fortin N."/>
            <person name="Friesen J.D."/>
            <person name="Fritz C."/>
            <person name="Goffeau A."/>
            <person name="Hall J."/>
            <person name="Hebling U."/>
            <person name="Heumann K."/>
            <person name="Hilbert H."/>
            <person name="Hillier L.W."/>
            <person name="Hunicke-Smith S."/>
            <person name="Hyman R.W."/>
            <person name="Johnston M."/>
            <person name="Kalman S."/>
            <person name="Kleine K."/>
            <person name="Komp C."/>
            <person name="Kurdi O."/>
            <person name="Lashkari D."/>
            <person name="Lew H."/>
            <person name="Lin A."/>
            <person name="Lin D."/>
            <person name="Louis E.J."/>
            <person name="Marathe R."/>
            <person name="Messenguy F."/>
            <person name="Mewes H.-W."/>
            <person name="Mirtipati S."/>
            <person name="Moestl D."/>
            <person name="Mueller-Auer S."/>
            <person name="Namath A."/>
            <person name="Nentwich U."/>
            <person name="Oefner P."/>
            <person name="Pearson D."/>
            <person name="Petel F.X."/>
            <person name="Pohl T.M."/>
            <person name="Purnelle B."/>
            <person name="Rajandream M.A."/>
            <person name="Rechmann S."/>
            <person name="Rieger M."/>
            <person name="Riles L."/>
            <person name="Roberts D."/>
            <person name="Schaefer M."/>
            <person name="Scharfe M."/>
            <person name="Scherens B."/>
            <person name="Schramm S."/>
            <person name="Schroeder M."/>
            <person name="Sdicu A.-M."/>
            <person name="Tettelin H."/>
            <person name="Urrestarazu L.A."/>
            <person name="Ushinsky S."/>
            <person name="Vierendeels F."/>
            <person name="Vissers S."/>
            <person name="Voss H."/>
            <person name="Walsh S.V."/>
            <person name="Wambutt R."/>
            <person name="Wang Y."/>
            <person name="Wedler E."/>
            <person name="Wedler H."/>
            <person name="Winnett E."/>
            <person name="Zhong W.-W."/>
            <person name="Zollner A."/>
            <person name="Vo D.H."/>
            <person name="Hani J."/>
        </authorList>
    </citation>
    <scope>NUCLEOTIDE SEQUENCE [LARGE SCALE GENOMIC DNA]</scope>
    <source>
        <strain>ATCC 204508 / S288c</strain>
    </source>
</reference>
<reference key="2">
    <citation type="journal article" date="2014" name="G3 (Bethesda)">
        <title>The reference genome sequence of Saccharomyces cerevisiae: Then and now.</title>
        <authorList>
            <person name="Engel S.R."/>
            <person name="Dietrich F.S."/>
            <person name="Fisk D.G."/>
            <person name="Binkley G."/>
            <person name="Balakrishnan R."/>
            <person name="Costanzo M.C."/>
            <person name="Dwight S.S."/>
            <person name="Hitz B.C."/>
            <person name="Karra K."/>
            <person name="Nash R.S."/>
            <person name="Weng S."/>
            <person name="Wong E.D."/>
            <person name="Lloyd P."/>
            <person name="Skrzypek M.S."/>
            <person name="Miyasato S.R."/>
            <person name="Simison M."/>
            <person name="Cherry J.M."/>
        </authorList>
    </citation>
    <scope>GENOME REANNOTATION</scope>
    <source>
        <strain>ATCC 204508 / S288c</strain>
    </source>
</reference>
<reference key="3">
    <citation type="journal article" date="2000" name="J. Biol. Chem.">
        <title>One of two genes encoding glycyl-tRNA synthetase in Saccharomyces cerevisiae provides mitochondrial and cytoplasmic functions.</title>
        <authorList>
            <person name="Turner R.J."/>
            <person name="Lovato M."/>
            <person name="Schimmel P."/>
        </authorList>
    </citation>
    <scope>FUNCTION</scope>
</reference>
<reference key="4">
    <citation type="journal article" date="2003" name="Nature">
        <title>Global analysis of protein localization in budding yeast.</title>
        <authorList>
            <person name="Huh W.-K."/>
            <person name="Falvo J.V."/>
            <person name="Gerke L.C."/>
            <person name="Carroll A.S."/>
            <person name="Howson R.W."/>
            <person name="Weissman J.S."/>
            <person name="O'Shea E.K."/>
        </authorList>
    </citation>
    <scope>SUBCELLULAR LOCATION [LARGE SCALE ANALYSIS]</scope>
</reference>
<reference key="5">
    <citation type="journal article" date="2003" name="Nature">
        <title>Global analysis of protein expression in yeast.</title>
        <authorList>
            <person name="Ghaemmaghami S."/>
            <person name="Huh W.-K."/>
            <person name="Bower K."/>
            <person name="Howson R.W."/>
            <person name="Belle A."/>
            <person name="Dephoure N."/>
            <person name="O'Shea E.K."/>
            <person name="Weissman J.S."/>
        </authorList>
    </citation>
    <scope>LEVEL OF PROTEIN EXPRESSION [LARGE SCALE ANALYSIS]</scope>
</reference>
<reference key="6">
    <citation type="journal article" date="2012" name="Proc. Natl. Acad. Sci. U.S.A.">
        <title>N-terminal acetylome analyses and functional insights of the N-terminal acetyltransferase NatB.</title>
        <authorList>
            <person name="Van Damme P."/>
            <person name="Lasa M."/>
            <person name="Polevoda B."/>
            <person name="Gazquez C."/>
            <person name="Elosegui-Artola A."/>
            <person name="Kim D.S."/>
            <person name="De Juan-Pardo E."/>
            <person name="Demeyer K."/>
            <person name="Hole K."/>
            <person name="Larrea E."/>
            <person name="Timmerman E."/>
            <person name="Prieto J."/>
            <person name="Arnesen T."/>
            <person name="Sherman F."/>
            <person name="Gevaert K."/>
            <person name="Aldabe R."/>
        </authorList>
    </citation>
    <scope>IDENTIFICATION BY MASS SPECTROMETRY [LARGE SCALE ANALYSIS]</scope>
</reference>
<reference key="7">
    <citation type="journal article" date="2013" name="Mol. Cell. Biol.">
        <title>An insertion peptide in yeast glycyl-tRNA synthetase facilitates both productive docking and catalysis of cognate tRNAs.</title>
        <authorList>
            <person name="Wu Y.H."/>
            <person name="Chang C.P."/>
            <person name="Chien C.I."/>
            <person name="Tseng Y.K."/>
            <person name="Wang C.C."/>
        </authorList>
    </citation>
    <scope>FUNCTION</scope>
    <scope>CATALYTIC ACTIVITY</scope>
    <scope>BIOPHYSICOCHEMICAL PROPERTIES</scope>
</reference>
<comment type="function">
    <text evidence="1 4">Catalyzes the ATP-dependent ligation of glycine to the 3'-end of its cognate tRNA, via the formation of an aminoacyl-adenylate intermediate (Gly-AMP) (PubMed:23816885). Also produces diadenosine tetraphosphate (Ap4A), a universal pleiotropic signaling molecule needed for cell regulation pathways, by direct condensation of 2 ATPs. Thereby, may play a special role in Ap4A homeostasis (By similarity).</text>
</comment>
<comment type="catalytic activity">
    <reaction evidence="4">
        <text>tRNA(Gly) + glycine + ATP = glycyl-tRNA(Gly) + AMP + diphosphate</text>
        <dbReference type="Rhea" id="RHEA:16013"/>
        <dbReference type="Rhea" id="RHEA-COMP:9664"/>
        <dbReference type="Rhea" id="RHEA-COMP:9683"/>
        <dbReference type="ChEBI" id="CHEBI:30616"/>
        <dbReference type="ChEBI" id="CHEBI:33019"/>
        <dbReference type="ChEBI" id="CHEBI:57305"/>
        <dbReference type="ChEBI" id="CHEBI:78442"/>
        <dbReference type="ChEBI" id="CHEBI:78522"/>
        <dbReference type="ChEBI" id="CHEBI:456215"/>
        <dbReference type="EC" id="6.1.1.14"/>
    </reaction>
    <physiologicalReaction direction="left-to-right" evidence="6">
        <dbReference type="Rhea" id="RHEA:16014"/>
    </physiologicalReaction>
</comment>
<comment type="catalytic activity">
    <reaction evidence="1">
        <text>2 ATP + H(+) = P(1),P(4)-bis(5'-adenosyl) tetraphosphate + diphosphate</text>
        <dbReference type="Rhea" id="RHEA:34935"/>
        <dbReference type="ChEBI" id="CHEBI:15378"/>
        <dbReference type="ChEBI" id="CHEBI:30616"/>
        <dbReference type="ChEBI" id="CHEBI:33019"/>
        <dbReference type="ChEBI" id="CHEBI:58141"/>
    </reaction>
</comment>
<comment type="biophysicochemical properties">
    <kinetics>
        <KM evidence="4">145 uM for glycine (at 25 degrees Celsius)</KM>
        <KM evidence="4">0.53 uM for tRNA(Gly) (at 25 degrees Celsius)</KM>
        <text evidence="4">kcat is 0.10 sec(-1) for the aminoacylation reaction (at 25 degrees Celsius).</text>
    </kinetics>
</comment>
<comment type="subunit">
    <text evidence="1">Homodimer.</text>
</comment>
<comment type="subcellular location">
    <subcellularLocation>
        <location evidence="2">Cytoplasm</location>
    </subcellularLocation>
</comment>
<comment type="miscellaneous">
    <text evidence="3">Present with 2290 molecules/cell in log phase SD medium.</text>
</comment>
<comment type="similarity">
    <text evidence="5">Belongs to the class-II aminoacyl-tRNA synthetase family.</text>
</comment>
<comment type="caution">
    <text evidence="5">GRS1, which appears to be a duplication of GRS2, is necessary and sufficient for both mitochondrial and cytoplasmic glycyl-tRNA synthetase activities, suggesting that GRS2 may not be essential.</text>
</comment>
<name>SYG2_YEAST</name>
<protein>
    <recommendedName>
        <fullName>Glycine--tRNA ligase 2</fullName>
        <ecNumber evidence="4">6.1.1.14</ecNumber>
    </recommendedName>
    <alternativeName>
        <fullName>Diadenosine tetraphosphate synthetase</fullName>
        <shortName>Ap4A synthetase</shortName>
        <ecNumber evidence="1">2.7.7.-</ecNumber>
    </alternativeName>
    <alternativeName>
        <fullName>Glycyl-tRNA synthetase 2</fullName>
        <shortName>GlyRS 2</shortName>
        <shortName>GlyRS2</shortName>
    </alternativeName>
</protein>
<organism>
    <name type="scientific">Saccharomyces cerevisiae (strain ATCC 204508 / S288c)</name>
    <name type="common">Baker's yeast</name>
    <dbReference type="NCBI Taxonomy" id="559292"/>
    <lineage>
        <taxon>Eukaryota</taxon>
        <taxon>Fungi</taxon>
        <taxon>Dikarya</taxon>
        <taxon>Ascomycota</taxon>
        <taxon>Saccharomycotina</taxon>
        <taxon>Saccharomycetes</taxon>
        <taxon>Saccharomycetales</taxon>
        <taxon>Saccharomycetaceae</taxon>
        <taxon>Saccharomyces</taxon>
    </lineage>
</organism>